<proteinExistence type="evidence at protein level"/>
<sequence length="903" mass="101222">MSQDDAEVASGVVLEELSSWSEEMCRRELPSVLPRLLSMYQCSESWIEHIRILKIIVEMFLPHMNHLTLEETLFSQVLPKSIKLFDGMICELTSEARELSSQNLEIQVTIRNILQAMVQVIGGFTGCVRHVCATQKSVFLGSIQSLPSFILHIIKSAFVHCKNSECVYSGRLHLVSDLLQVLFKEAYSLQKQLMGLLDTVCLDPSVDENNALIMVGVIHSLLDICSVISGMDQAFHANTWKFIIKQSLKHHSVIKSQLRHKEIISSLCEDILFSFHSCLQLAEQITQPAAQGNADYRLFQKTLKLCRFFANSLLHYTKECLPFLSDSCCTLHQLYLQIHSKFLSLCAAKTSKAQQEEIASTFLVLLDPLISQLLKSQPFVQAVLASKLALPCELQLPQVLLLVVAMDKLPSQPQDVQTLWSTEDMTRMSILKGIFYNFGQCSGELSLPTHLQGTKGKGQAEVPVTLYQHVCVHLCAFVASFHSSLFPRLDAALLNAVLSTNMSTSLLAMDVWCFLARYGTAKLGAHHVTLVAHLVKSCPGKCVQLTNLSILLKRLLFFMAAPHQVQFIQKFSPKEADNLHLWQYISLQAFDADLRKPVACELVRVCRAQCRKWLSSTRTLAELDSLNTALSVVLTVCNSAGEALDSRQLTAVTEVLGELWTFINVEQIISQPYVQQAFSLLLQLLAFFIQTVDLQLISQVVNVLTSVIKLEPPDHVSLAVLDFISSLGKLYISQTIRDKVLPSLSCILTSLIVNKNWLLEQHTLEAFTQFAEGTKHEEIVPQCLGSEEIKNKVVSFLEKTESVDEAEVATVDNVKQEKGTFWEPAAKVTVEEVKTSAFQPHTKRARRVLPFEEEYRSVFKAAARALETTEFLLKHSLAPAWLLPELEALQGRIEKLKRCVLTG</sequence>
<protein>
    <recommendedName>
        <fullName evidence="1">FIGNL1-interacting regulator of recombination and mitosis</fullName>
    </recommendedName>
    <alternativeName>
        <fullName evidence="1">FIDGETIN-like-1 interacting protein</fullName>
        <shortName evidence="1">FLIP</shortName>
    </alternativeName>
    <alternativeName>
        <fullName>POLO1-associating protein</fullName>
    </alternativeName>
</protein>
<keyword id="KW-0007">Acetylation</keyword>
<keyword id="KW-0025">Alternative splicing</keyword>
<keyword id="KW-0137">Centromere</keyword>
<keyword id="KW-0158">Chromosome</keyword>
<keyword id="KW-0963">Cytoplasm</keyword>
<keyword id="KW-0206">Cytoskeleton</keyword>
<keyword id="KW-0995">Kinetochore</keyword>
<keyword id="KW-0539">Nucleus</keyword>
<keyword id="KW-0597">Phosphoprotein</keyword>
<keyword id="KW-1185">Reference proteome</keyword>
<organism>
    <name type="scientific">Mus musculus</name>
    <name type="common">Mouse</name>
    <dbReference type="NCBI Taxonomy" id="10090"/>
    <lineage>
        <taxon>Eukaryota</taxon>
        <taxon>Metazoa</taxon>
        <taxon>Chordata</taxon>
        <taxon>Craniata</taxon>
        <taxon>Vertebrata</taxon>
        <taxon>Euteleostomi</taxon>
        <taxon>Mammalia</taxon>
        <taxon>Eutheria</taxon>
        <taxon>Euarchontoglires</taxon>
        <taxon>Glires</taxon>
        <taxon>Rodentia</taxon>
        <taxon>Myomorpha</taxon>
        <taxon>Muroidea</taxon>
        <taxon>Muridae</taxon>
        <taxon>Murinae</taxon>
        <taxon>Mus</taxon>
        <taxon>Mus</taxon>
    </lineage>
</organism>
<comment type="function">
    <text evidence="1">Regulates PLK1 kinase activity at kinetochores and promotes faithful chromosome segregation in prometaphase by bridging kinase and phosphatase activities. Phosphorylation of FIRRM by PLK1 negatively regulates its interaction with the phosphatase, PPP1CC, thus creating a negative feedback loop for maintaining proper PLK1 kinase activity during mitosis. In complex with FIGL1 may regulate homologous recombination.</text>
</comment>
<comment type="subunit">
    <text evidence="1">Interacts (via its N-terminal region) with PLK1; controls PLK1 kinase activity. Interacts (via the KVVXF motif) with PPP1CC; controls PLK1 kinase activity. Interacts with FIGNL1; may regulate homologous recombination.</text>
</comment>
<comment type="subcellular location">
    <subcellularLocation>
        <location evidence="1">Chromosome</location>
        <location evidence="1">Centromere</location>
        <location evidence="1">Kinetochore</location>
    </subcellularLocation>
    <subcellularLocation>
        <location evidence="1">Nucleus</location>
    </subcellularLocation>
    <subcellularLocation>
        <location evidence="1">Chromosome</location>
        <location evidence="1">Centromere</location>
    </subcellularLocation>
    <subcellularLocation>
        <location evidence="1">Midbody</location>
    </subcellularLocation>
    <subcellularLocation>
        <location evidence="1">Cytoplasm</location>
        <location evidence="1">Cytoskeleton</location>
        <location evidence="1">Spindle</location>
    </subcellularLocation>
    <text evidence="1">Exhibits cell-cycle-dependent distribution during mitosis. Detected in the nucleus in interphase. Colocalizes with PLK1 to the centromeres in a nearby prometaphase cells. Relocates to the central spindle in anaphase and to the midbody in telophase cells.</text>
</comment>
<comment type="alternative products">
    <event type="alternative splicing"/>
    <isoform>
        <id>Q3TQQ9-1</id>
        <name>1</name>
        <sequence type="displayed"/>
    </isoform>
    <isoform>
        <id>Q3TQQ9-2</id>
        <name>2</name>
        <sequence type="described" ref="VSP_023447"/>
    </isoform>
    <isoform>
        <id>Q3TQQ9-3</id>
        <name>3</name>
        <sequence type="described" ref="VSP_023446"/>
    </isoform>
</comment>
<comment type="PTM">
    <text evidence="1">Phosphorylation at Ser-101 by PLK1 strengthens FIRRM-PLK1 interaction. Phosphorylation at Ser-795 by PLK1 negatively regulates its interaction with PPP1CC.</text>
</comment>
<name>FIRRM_MOUSE</name>
<feature type="chain" id="PRO_0000279462" description="FIGNL1-interacting regulator of recombination and mitosis">
    <location>
        <begin position="1"/>
        <end position="903"/>
    </location>
</feature>
<feature type="modified residue" description="Phosphoserine" evidence="1">
    <location>
        <position position="101"/>
    </location>
</feature>
<feature type="modified residue" description="Phosphoserine" evidence="1">
    <location>
        <position position="795"/>
    </location>
</feature>
<feature type="modified residue" description="N6-acetyllysine" evidence="1">
    <location>
        <position position="843"/>
    </location>
</feature>
<feature type="splice variant" id="VSP_023446" description="In isoform 3." evidence="2">
    <location>
        <begin position="59"/>
        <end position="116"/>
    </location>
</feature>
<feature type="splice variant" id="VSP_023447" description="In isoform 2." evidence="2">
    <original>G</original>
    <variation>GGSTCAQSPRPALTRFDTLPLPTWL</variation>
    <location>
        <position position="903"/>
    </location>
</feature>
<feature type="sequence conflict" description="In Ref. 1; BAE24790." evidence="3" ref="1">
    <original>K</original>
    <variation>R</variation>
    <location>
        <position position="261"/>
    </location>
</feature>
<feature type="sequence conflict" description="In Ref. 1; BAE24790." evidence="3" ref="1">
    <original>M</original>
    <variation>R</variation>
    <location>
        <position position="428"/>
    </location>
</feature>
<feature type="sequence conflict" description="In Ref. 2; AAH52855." evidence="3" ref="2">
    <original>I</original>
    <variation>M</variation>
    <location>
        <position position="430"/>
    </location>
</feature>
<feature type="sequence conflict" description="In Ref. 1; BAE24790." evidence="3" ref="1">
    <original>P</original>
    <variation>H</variation>
    <location>
        <position position="539"/>
    </location>
</feature>
<feature type="sequence conflict" description="In Ref. 2; AAH52855." evidence="3" ref="2">
    <original>K</original>
    <variation>E</variation>
    <location>
        <position position="897"/>
    </location>
</feature>
<reference key="1">
    <citation type="journal article" date="2005" name="Science">
        <title>The transcriptional landscape of the mammalian genome.</title>
        <authorList>
            <person name="Carninci P."/>
            <person name="Kasukawa T."/>
            <person name="Katayama S."/>
            <person name="Gough J."/>
            <person name="Frith M.C."/>
            <person name="Maeda N."/>
            <person name="Oyama R."/>
            <person name="Ravasi T."/>
            <person name="Lenhard B."/>
            <person name="Wells C."/>
            <person name="Kodzius R."/>
            <person name="Shimokawa K."/>
            <person name="Bajic V.B."/>
            <person name="Brenner S.E."/>
            <person name="Batalov S."/>
            <person name="Forrest A.R."/>
            <person name="Zavolan M."/>
            <person name="Davis M.J."/>
            <person name="Wilming L.G."/>
            <person name="Aidinis V."/>
            <person name="Allen J.E."/>
            <person name="Ambesi-Impiombato A."/>
            <person name="Apweiler R."/>
            <person name="Aturaliya R.N."/>
            <person name="Bailey T.L."/>
            <person name="Bansal M."/>
            <person name="Baxter L."/>
            <person name="Beisel K.W."/>
            <person name="Bersano T."/>
            <person name="Bono H."/>
            <person name="Chalk A.M."/>
            <person name="Chiu K.P."/>
            <person name="Choudhary V."/>
            <person name="Christoffels A."/>
            <person name="Clutterbuck D.R."/>
            <person name="Crowe M.L."/>
            <person name="Dalla E."/>
            <person name="Dalrymple B.P."/>
            <person name="de Bono B."/>
            <person name="Della Gatta G."/>
            <person name="di Bernardo D."/>
            <person name="Down T."/>
            <person name="Engstrom P."/>
            <person name="Fagiolini M."/>
            <person name="Faulkner G."/>
            <person name="Fletcher C.F."/>
            <person name="Fukushima T."/>
            <person name="Furuno M."/>
            <person name="Futaki S."/>
            <person name="Gariboldi M."/>
            <person name="Georgii-Hemming P."/>
            <person name="Gingeras T.R."/>
            <person name="Gojobori T."/>
            <person name="Green R.E."/>
            <person name="Gustincich S."/>
            <person name="Harbers M."/>
            <person name="Hayashi Y."/>
            <person name="Hensch T.K."/>
            <person name="Hirokawa N."/>
            <person name="Hill D."/>
            <person name="Huminiecki L."/>
            <person name="Iacono M."/>
            <person name="Ikeo K."/>
            <person name="Iwama A."/>
            <person name="Ishikawa T."/>
            <person name="Jakt M."/>
            <person name="Kanapin A."/>
            <person name="Katoh M."/>
            <person name="Kawasawa Y."/>
            <person name="Kelso J."/>
            <person name="Kitamura H."/>
            <person name="Kitano H."/>
            <person name="Kollias G."/>
            <person name="Krishnan S.P."/>
            <person name="Kruger A."/>
            <person name="Kummerfeld S.K."/>
            <person name="Kurochkin I.V."/>
            <person name="Lareau L.F."/>
            <person name="Lazarevic D."/>
            <person name="Lipovich L."/>
            <person name="Liu J."/>
            <person name="Liuni S."/>
            <person name="McWilliam S."/>
            <person name="Madan Babu M."/>
            <person name="Madera M."/>
            <person name="Marchionni L."/>
            <person name="Matsuda H."/>
            <person name="Matsuzawa S."/>
            <person name="Miki H."/>
            <person name="Mignone F."/>
            <person name="Miyake S."/>
            <person name="Morris K."/>
            <person name="Mottagui-Tabar S."/>
            <person name="Mulder N."/>
            <person name="Nakano N."/>
            <person name="Nakauchi H."/>
            <person name="Ng P."/>
            <person name="Nilsson R."/>
            <person name="Nishiguchi S."/>
            <person name="Nishikawa S."/>
            <person name="Nori F."/>
            <person name="Ohara O."/>
            <person name="Okazaki Y."/>
            <person name="Orlando V."/>
            <person name="Pang K.C."/>
            <person name="Pavan W.J."/>
            <person name="Pavesi G."/>
            <person name="Pesole G."/>
            <person name="Petrovsky N."/>
            <person name="Piazza S."/>
            <person name="Reed J."/>
            <person name="Reid J.F."/>
            <person name="Ring B.Z."/>
            <person name="Ringwald M."/>
            <person name="Rost B."/>
            <person name="Ruan Y."/>
            <person name="Salzberg S.L."/>
            <person name="Sandelin A."/>
            <person name="Schneider C."/>
            <person name="Schoenbach C."/>
            <person name="Sekiguchi K."/>
            <person name="Semple C.A."/>
            <person name="Seno S."/>
            <person name="Sessa L."/>
            <person name="Sheng Y."/>
            <person name="Shibata Y."/>
            <person name="Shimada H."/>
            <person name="Shimada K."/>
            <person name="Silva D."/>
            <person name="Sinclair B."/>
            <person name="Sperling S."/>
            <person name="Stupka E."/>
            <person name="Sugiura K."/>
            <person name="Sultana R."/>
            <person name="Takenaka Y."/>
            <person name="Taki K."/>
            <person name="Tammoja K."/>
            <person name="Tan S.L."/>
            <person name="Tang S."/>
            <person name="Taylor M.S."/>
            <person name="Tegner J."/>
            <person name="Teichmann S.A."/>
            <person name="Ueda H.R."/>
            <person name="van Nimwegen E."/>
            <person name="Verardo R."/>
            <person name="Wei C.L."/>
            <person name="Yagi K."/>
            <person name="Yamanishi H."/>
            <person name="Zabarovsky E."/>
            <person name="Zhu S."/>
            <person name="Zimmer A."/>
            <person name="Hide W."/>
            <person name="Bult C."/>
            <person name="Grimmond S.M."/>
            <person name="Teasdale R.D."/>
            <person name="Liu E.T."/>
            <person name="Brusic V."/>
            <person name="Quackenbush J."/>
            <person name="Wahlestedt C."/>
            <person name="Mattick J.S."/>
            <person name="Hume D.A."/>
            <person name="Kai C."/>
            <person name="Sasaki D."/>
            <person name="Tomaru Y."/>
            <person name="Fukuda S."/>
            <person name="Kanamori-Katayama M."/>
            <person name="Suzuki M."/>
            <person name="Aoki J."/>
            <person name="Arakawa T."/>
            <person name="Iida J."/>
            <person name="Imamura K."/>
            <person name="Itoh M."/>
            <person name="Kato T."/>
            <person name="Kawaji H."/>
            <person name="Kawagashira N."/>
            <person name="Kawashima T."/>
            <person name="Kojima M."/>
            <person name="Kondo S."/>
            <person name="Konno H."/>
            <person name="Nakano K."/>
            <person name="Ninomiya N."/>
            <person name="Nishio T."/>
            <person name="Okada M."/>
            <person name="Plessy C."/>
            <person name="Shibata K."/>
            <person name="Shiraki T."/>
            <person name="Suzuki S."/>
            <person name="Tagami M."/>
            <person name="Waki K."/>
            <person name="Watahiki A."/>
            <person name="Okamura-Oho Y."/>
            <person name="Suzuki H."/>
            <person name="Kawai J."/>
            <person name="Hayashizaki Y."/>
        </authorList>
    </citation>
    <scope>NUCLEOTIDE SEQUENCE [LARGE SCALE MRNA] (ISOFORMS 2 AND 3)</scope>
    <source>
        <strain>C57BL/6J</strain>
        <tissue>Egg</tissue>
    </source>
</reference>
<reference key="2">
    <citation type="journal article" date="2004" name="Genome Res.">
        <title>The status, quality, and expansion of the NIH full-length cDNA project: the Mammalian Gene Collection (MGC).</title>
        <authorList>
            <consortium name="The MGC Project Team"/>
        </authorList>
    </citation>
    <scope>NUCLEOTIDE SEQUENCE [LARGE SCALE MRNA] (ISOFORM 1)</scope>
    <source>
        <strain>C3H/He</strain>
        <strain>C57BL/6J</strain>
        <tissue>Brain</tissue>
        <tissue>Osteoblast</tissue>
    </source>
</reference>
<reference key="3">
    <citation type="journal article" date="2010" name="Cell">
        <title>A tissue-specific atlas of mouse protein phosphorylation and expression.</title>
        <authorList>
            <person name="Huttlin E.L."/>
            <person name="Jedrychowski M.P."/>
            <person name="Elias J.E."/>
            <person name="Goswami T."/>
            <person name="Rad R."/>
            <person name="Beausoleil S.A."/>
            <person name="Villen J."/>
            <person name="Haas W."/>
            <person name="Sowa M.E."/>
            <person name="Gygi S.P."/>
        </authorList>
    </citation>
    <scope>IDENTIFICATION BY MASS SPECTROMETRY [LARGE SCALE ANALYSIS]</scope>
    <source>
        <tissue>Testis</tissue>
    </source>
</reference>
<dbReference type="EMBL" id="AK141661">
    <property type="protein sequence ID" value="BAE24790.1"/>
    <property type="molecule type" value="mRNA"/>
</dbReference>
<dbReference type="EMBL" id="AK163374">
    <property type="protein sequence ID" value="BAE37323.1"/>
    <property type="molecule type" value="mRNA"/>
</dbReference>
<dbReference type="EMBL" id="BC052855">
    <property type="protein sequence ID" value="AAH52855.1"/>
    <property type="molecule type" value="mRNA"/>
</dbReference>
<dbReference type="EMBL" id="BC055324">
    <property type="protein sequence ID" value="AAH55324.1"/>
    <property type="molecule type" value="mRNA"/>
</dbReference>
<dbReference type="CCDS" id="CCDS35752.1">
    <molecule id="Q3TQQ9-1"/>
</dbReference>
<dbReference type="CCDS" id="CCDS87908.1">
    <molecule id="Q3TQQ9-2"/>
</dbReference>
<dbReference type="RefSeq" id="NP_001343978.1">
    <molecule id="Q3TQQ9-2"/>
    <property type="nucleotide sequence ID" value="NM_001357049.1"/>
</dbReference>
<dbReference type="RefSeq" id="NP_958752.1">
    <molecule id="Q3TQQ9-1"/>
    <property type="nucleotide sequence ID" value="NM_201364.2"/>
</dbReference>
<dbReference type="BioGRID" id="237868">
    <property type="interactions" value="1"/>
</dbReference>
<dbReference type="FunCoup" id="Q3TQQ9">
    <property type="interactions" value="1645"/>
</dbReference>
<dbReference type="STRING" id="10090.ENSMUSP00000043143"/>
<dbReference type="iPTMnet" id="Q3TQQ9"/>
<dbReference type="PhosphoSitePlus" id="Q3TQQ9"/>
<dbReference type="SwissPalm" id="Q3TQQ9"/>
<dbReference type="jPOST" id="Q3TQQ9"/>
<dbReference type="PaxDb" id="10090-ENSMUSP00000043143"/>
<dbReference type="PeptideAtlas" id="Q3TQQ9"/>
<dbReference type="Pumba" id="Q3TQQ9"/>
<dbReference type="Antibodypedia" id="20545">
    <property type="antibodies" value="83 antibodies from 13 providers"/>
</dbReference>
<dbReference type="Ensembl" id="ENSMUST00000045876.8">
    <molecule id="Q3TQQ9-1"/>
    <property type="protein sequence ID" value="ENSMUSP00000043143.7"/>
    <property type="gene ID" value="ENSMUSG00000041406.15"/>
</dbReference>
<dbReference type="Ensembl" id="ENSMUST00000097493.10">
    <molecule id="Q3TQQ9-2"/>
    <property type="protein sequence ID" value="ENSMUSP00000095101.4"/>
    <property type="gene ID" value="ENSMUSG00000041406.15"/>
</dbReference>
<dbReference type="GeneID" id="381306"/>
<dbReference type="KEGG" id="mmu:381306"/>
<dbReference type="UCSC" id="uc007dhs.1">
    <molecule id="Q3TQQ9-2"/>
    <property type="organism name" value="mouse"/>
</dbReference>
<dbReference type="UCSC" id="uc007dhu.1">
    <molecule id="Q3TQQ9-1"/>
    <property type="organism name" value="mouse"/>
</dbReference>
<dbReference type="AGR" id="MGI:3590554"/>
<dbReference type="CTD" id="55732"/>
<dbReference type="MGI" id="MGI:3590554">
    <property type="gene designation" value="Firrm"/>
</dbReference>
<dbReference type="VEuPathDB" id="HostDB:ENSMUSG00000041406"/>
<dbReference type="eggNOG" id="ENOG502QQPV">
    <property type="taxonomic scope" value="Eukaryota"/>
</dbReference>
<dbReference type="GeneTree" id="ENSGT00390000004791"/>
<dbReference type="HOGENOM" id="CLU_335441_0_0_1"/>
<dbReference type="InParanoid" id="Q3TQQ9"/>
<dbReference type="OMA" id="PCVQQTF"/>
<dbReference type="PhylomeDB" id="Q3TQQ9"/>
<dbReference type="TreeFam" id="TF328571"/>
<dbReference type="Reactome" id="R-MMU-2500257">
    <property type="pathway name" value="Resolution of Sister Chromatid Cohesion"/>
</dbReference>
<dbReference type="Reactome" id="R-MMU-5693568">
    <property type="pathway name" value="Resolution of D-loop Structures through Holliday Junction Intermediates"/>
</dbReference>
<dbReference type="Reactome" id="R-MMU-912446">
    <property type="pathway name" value="Meiotic recombination"/>
</dbReference>
<dbReference type="BioGRID-ORCS" id="381306">
    <property type="hits" value="11 hits in 80 CRISPR screens"/>
</dbReference>
<dbReference type="PRO" id="PR:Q3TQQ9"/>
<dbReference type="Proteomes" id="UP000000589">
    <property type="component" value="Chromosome 1"/>
</dbReference>
<dbReference type="RNAct" id="Q3TQQ9">
    <property type="molecule type" value="protein"/>
</dbReference>
<dbReference type="Bgee" id="ENSMUSG00000041406">
    <property type="expression patterns" value="Expressed in urogenital fold and 144 other cell types or tissues"/>
</dbReference>
<dbReference type="ExpressionAtlas" id="Q3TQQ9">
    <property type="expression patterns" value="baseline and differential"/>
</dbReference>
<dbReference type="GO" id="GO:0000775">
    <property type="term" value="C:chromosome, centromeric region"/>
    <property type="evidence" value="ECO:0000250"/>
    <property type="project" value="UniProtKB"/>
</dbReference>
<dbReference type="GO" id="GO:0005737">
    <property type="term" value="C:cytoplasm"/>
    <property type="evidence" value="ECO:0007669"/>
    <property type="project" value="UniProtKB-KW"/>
</dbReference>
<dbReference type="GO" id="GO:0000776">
    <property type="term" value="C:kinetochore"/>
    <property type="evidence" value="ECO:0000250"/>
    <property type="project" value="UniProtKB"/>
</dbReference>
<dbReference type="GO" id="GO:0030496">
    <property type="term" value="C:midbody"/>
    <property type="evidence" value="ECO:0000250"/>
    <property type="project" value="UniProtKB"/>
</dbReference>
<dbReference type="GO" id="GO:0005730">
    <property type="term" value="C:nucleolus"/>
    <property type="evidence" value="ECO:0007669"/>
    <property type="project" value="Ensembl"/>
</dbReference>
<dbReference type="GO" id="GO:0005654">
    <property type="term" value="C:nucleoplasm"/>
    <property type="evidence" value="ECO:0007669"/>
    <property type="project" value="Ensembl"/>
</dbReference>
<dbReference type="GO" id="GO:0005634">
    <property type="term" value="C:nucleus"/>
    <property type="evidence" value="ECO:0000250"/>
    <property type="project" value="UniProtKB"/>
</dbReference>
<dbReference type="GO" id="GO:0051233">
    <property type="term" value="C:spindle midzone"/>
    <property type="evidence" value="ECO:0000250"/>
    <property type="project" value="UniProtKB"/>
</dbReference>
<dbReference type="GO" id="GO:0019901">
    <property type="term" value="F:protein kinase binding"/>
    <property type="evidence" value="ECO:0000250"/>
    <property type="project" value="UniProtKB"/>
</dbReference>
<dbReference type="GO" id="GO:0007059">
    <property type="term" value="P:chromosome segregation"/>
    <property type="evidence" value="ECO:0007669"/>
    <property type="project" value="Ensembl"/>
</dbReference>
<dbReference type="GO" id="GO:0036297">
    <property type="term" value="P:interstrand cross-link repair"/>
    <property type="evidence" value="ECO:0000250"/>
    <property type="project" value="UniProtKB"/>
</dbReference>
<dbReference type="GO" id="GO:0000278">
    <property type="term" value="P:mitotic cell cycle"/>
    <property type="evidence" value="ECO:0000250"/>
    <property type="project" value="UniProtKB"/>
</dbReference>
<dbReference type="InterPro" id="IPR027902">
    <property type="entry name" value="DUF4487"/>
</dbReference>
<dbReference type="PANTHER" id="PTHR16071">
    <property type="entry name" value="CHROMOSOME 1 OPEN READING FRAME 112"/>
    <property type="match status" value="1"/>
</dbReference>
<dbReference type="PANTHER" id="PTHR16071:SF2">
    <property type="entry name" value="FIGNL1-INTERACTING REGULATOR OF RECOMBINATION AND MITOSIS"/>
    <property type="match status" value="1"/>
</dbReference>
<dbReference type="Pfam" id="PF14868">
    <property type="entry name" value="DUF4487"/>
    <property type="match status" value="1"/>
</dbReference>
<accession>Q3TQQ9</accession>
<accession>Q3UR98</accession>
<accession>Q5RKU3</accession>
<accession>Q7TMQ3</accession>
<evidence type="ECO:0000250" key="1">
    <source>
        <dbReference type="UniProtKB" id="Q9NSG2"/>
    </source>
</evidence>
<evidence type="ECO:0000303" key="2">
    <source>
    </source>
</evidence>
<evidence type="ECO:0000305" key="3"/>
<gene>
    <name evidence="1" type="primary">Firrm</name>
</gene>